<name>BCHN_RHOPA</name>
<keyword id="KW-0004">4Fe-4S</keyword>
<keyword id="KW-0067">ATP-binding</keyword>
<keyword id="KW-0077">Bacteriochlorophyll biosynthesis</keyword>
<keyword id="KW-0149">Chlorophyll biosynthesis</keyword>
<keyword id="KW-0408">Iron</keyword>
<keyword id="KW-0411">Iron-sulfur</keyword>
<keyword id="KW-0479">Metal-binding</keyword>
<keyword id="KW-0547">Nucleotide-binding</keyword>
<keyword id="KW-0560">Oxidoreductase</keyword>
<keyword id="KW-0602">Photosynthesis</keyword>
<feature type="chain" id="PRO_0000324019" description="Light-independent protochlorophyllide reductase subunit N">
    <location>
        <begin position="1"/>
        <end position="429"/>
    </location>
</feature>
<feature type="binding site" evidence="1">
    <location>
        <position position="32"/>
    </location>
    <ligand>
        <name>[4Fe-4S] cluster</name>
        <dbReference type="ChEBI" id="CHEBI:49883"/>
        <note>ligand shared with heterodimeric partner</note>
    </ligand>
</feature>
<feature type="binding site" evidence="1">
    <location>
        <position position="57"/>
    </location>
    <ligand>
        <name>[4Fe-4S] cluster</name>
        <dbReference type="ChEBI" id="CHEBI:49883"/>
        <note>ligand shared with heterodimeric partner</note>
    </ligand>
</feature>
<feature type="binding site" evidence="1">
    <location>
        <position position="118"/>
    </location>
    <ligand>
        <name>[4Fe-4S] cluster</name>
        <dbReference type="ChEBI" id="CHEBI:49883"/>
        <note>ligand shared with heterodimeric partner</note>
    </ligand>
</feature>
<protein>
    <recommendedName>
        <fullName evidence="1">Light-independent protochlorophyllide reductase subunit N</fullName>
        <shortName evidence="1">DPOR subunit N</shortName>
        <shortName evidence="1">LI-POR subunit N</shortName>
        <ecNumber evidence="1">1.3.7.7</ecNumber>
    </recommendedName>
</protein>
<proteinExistence type="inferred from homology"/>
<gene>
    <name evidence="1" type="primary">bchN</name>
    <name type="ordered locus">RPA1542</name>
</gene>
<accession>Q6N9K3</accession>
<reference key="1">
    <citation type="journal article" date="2004" name="Nat. Biotechnol.">
        <title>Complete genome sequence of the metabolically versatile photosynthetic bacterium Rhodopseudomonas palustris.</title>
        <authorList>
            <person name="Larimer F.W."/>
            <person name="Chain P."/>
            <person name="Hauser L."/>
            <person name="Lamerdin J.E."/>
            <person name="Malfatti S."/>
            <person name="Do L."/>
            <person name="Land M.L."/>
            <person name="Pelletier D.A."/>
            <person name="Beatty J.T."/>
            <person name="Lang A.S."/>
            <person name="Tabita F.R."/>
            <person name="Gibson J.L."/>
            <person name="Hanson T.E."/>
            <person name="Bobst C."/>
            <person name="Torres y Torres J.L."/>
            <person name="Peres C."/>
            <person name="Harrison F.H."/>
            <person name="Gibson J."/>
            <person name="Harwood C.S."/>
        </authorList>
    </citation>
    <scope>NUCLEOTIDE SEQUENCE [LARGE SCALE GENOMIC DNA]</scope>
    <source>
        <strain>ATCC BAA-98 / CGA009</strain>
    </source>
</reference>
<evidence type="ECO:0000255" key="1">
    <source>
        <dbReference type="HAMAP-Rule" id="MF_00352"/>
    </source>
</evidence>
<comment type="function">
    <text evidence="1">Component of the dark-operative protochlorophyllide reductase (DPOR) that uses Mg-ATP and reduced ferredoxin to reduce ring D of protochlorophyllide (Pchlide) to form chlorophyllide a (Chlide). This reaction is light-independent. The NB-protein (BchN-BchB) is the catalytic component of the complex.</text>
</comment>
<comment type="catalytic activity">
    <reaction evidence="1">
        <text>chlorophyllide a + oxidized 2[4Fe-4S]-[ferredoxin] + 2 ADP + 2 phosphate = protochlorophyllide a + reduced 2[4Fe-4S]-[ferredoxin] + 2 ATP + 2 H2O</text>
        <dbReference type="Rhea" id="RHEA:28202"/>
        <dbReference type="Rhea" id="RHEA-COMP:10002"/>
        <dbReference type="Rhea" id="RHEA-COMP:10004"/>
        <dbReference type="ChEBI" id="CHEBI:15377"/>
        <dbReference type="ChEBI" id="CHEBI:30616"/>
        <dbReference type="ChEBI" id="CHEBI:33722"/>
        <dbReference type="ChEBI" id="CHEBI:33723"/>
        <dbReference type="ChEBI" id="CHEBI:43474"/>
        <dbReference type="ChEBI" id="CHEBI:83348"/>
        <dbReference type="ChEBI" id="CHEBI:83350"/>
        <dbReference type="ChEBI" id="CHEBI:456216"/>
        <dbReference type="EC" id="1.3.7.7"/>
    </reaction>
</comment>
<comment type="cofactor">
    <cofactor evidence="1">
        <name>[4Fe-4S] cluster</name>
        <dbReference type="ChEBI" id="CHEBI:49883"/>
    </cofactor>
    <text evidence="1">Binds 1 [4Fe-4S] cluster per heterodimer. The cluster is bound at the heterodimer interface by residues from both subunits.</text>
</comment>
<comment type="pathway">
    <text evidence="1">Porphyrin-containing compound metabolism; bacteriochlorophyll biosynthesis (light-independent).</text>
</comment>
<comment type="subunit">
    <text evidence="1">Protochlorophyllide reductase is composed of three subunits; BchL, BchN and BchB. Forms a heterotetramer of two BchB and two BchN subunits.</text>
</comment>
<comment type="similarity">
    <text evidence="1">Belongs to the BchN/ChlN family.</text>
</comment>
<sequence>MTVHVTGCSTATADQLVSREIRTESGQREVFCGLTGIVWLHRKIQDAFFLVVGSRTCAHLVQSAAGVMIFAEPRFGTAIMEEKDLAGLTDANDELDRVVTQLLARRPDIKLLFLVGSCPSEVIKLDLSRAALRLSQRFSPGVRILNYSGSGIETTFTQGEDACLASLVPELPAQTDTKPSLLVVGSLADVVEDQFARMFEALGVGNVAFFPPRKSTALPSVGPNTKILMAQPFLPDTVRALEERGAKRLAAPFPLGVEGTTGWLRAAADAFGVDPAKFEQVTAPNRARAERALSAFKSELGGRRIFFFPDSQLEIPLARFLSRELDMQLVEVATPYLHREHLAEELKLLPIEVALTEGQDVDDQLDRCRIARPDIVVCGLGLANPLEAEGITTKWSIELVFTPIQGYEQAADLAELFARPLVRRAKLVA</sequence>
<dbReference type="EC" id="1.3.7.7" evidence="1"/>
<dbReference type="EMBL" id="BX572597">
    <property type="protein sequence ID" value="CAE26983.1"/>
    <property type="molecule type" value="Genomic_DNA"/>
</dbReference>
<dbReference type="RefSeq" id="WP_011157101.1">
    <property type="nucleotide sequence ID" value="NZ_CP116810.1"/>
</dbReference>
<dbReference type="SMR" id="Q6N9K3"/>
<dbReference type="STRING" id="258594.RPA1542"/>
<dbReference type="GeneID" id="66892572"/>
<dbReference type="eggNOG" id="COG2710">
    <property type="taxonomic scope" value="Bacteria"/>
</dbReference>
<dbReference type="HOGENOM" id="CLU_037170_0_0_5"/>
<dbReference type="PhylomeDB" id="Q6N9K3"/>
<dbReference type="UniPathway" id="UPA00671"/>
<dbReference type="GO" id="GO:0051539">
    <property type="term" value="F:4 iron, 4 sulfur cluster binding"/>
    <property type="evidence" value="ECO:0007669"/>
    <property type="project" value="UniProtKB-UniRule"/>
</dbReference>
<dbReference type="GO" id="GO:0005524">
    <property type="term" value="F:ATP binding"/>
    <property type="evidence" value="ECO:0007669"/>
    <property type="project" value="UniProtKB-UniRule"/>
</dbReference>
<dbReference type="GO" id="GO:0046872">
    <property type="term" value="F:metal ion binding"/>
    <property type="evidence" value="ECO:0007669"/>
    <property type="project" value="UniProtKB-KW"/>
</dbReference>
<dbReference type="GO" id="GO:0016730">
    <property type="term" value="F:oxidoreductase activity, acting on iron-sulfur proteins as donors"/>
    <property type="evidence" value="ECO:0007669"/>
    <property type="project" value="InterPro"/>
</dbReference>
<dbReference type="GO" id="GO:0016636">
    <property type="term" value="F:oxidoreductase activity, acting on the CH-CH group of donors, iron-sulfur protein as acceptor"/>
    <property type="evidence" value="ECO:0007669"/>
    <property type="project" value="UniProtKB-UniRule"/>
</dbReference>
<dbReference type="GO" id="GO:0036070">
    <property type="term" value="P:light-independent bacteriochlorophyll biosynthetic process"/>
    <property type="evidence" value="ECO:0007669"/>
    <property type="project" value="UniProtKB-UniRule"/>
</dbReference>
<dbReference type="GO" id="GO:0019685">
    <property type="term" value="P:photosynthesis, dark reaction"/>
    <property type="evidence" value="ECO:0007669"/>
    <property type="project" value="InterPro"/>
</dbReference>
<dbReference type="CDD" id="cd01979">
    <property type="entry name" value="Pchlide_reductase_N"/>
    <property type="match status" value="1"/>
</dbReference>
<dbReference type="Gene3D" id="3.40.50.1980">
    <property type="entry name" value="Nitrogenase molybdenum iron protein domain"/>
    <property type="match status" value="3"/>
</dbReference>
<dbReference type="HAMAP" id="MF_00352">
    <property type="entry name" value="ChlN_BchN"/>
    <property type="match status" value="1"/>
</dbReference>
<dbReference type="InterPro" id="IPR050293">
    <property type="entry name" value="LIPOR_BchN/ChlN"/>
</dbReference>
<dbReference type="InterPro" id="IPR000510">
    <property type="entry name" value="Nase/OxRdtase_comp1"/>
</dbReference>
<dbReference type="InterPro" id="IPR005970">
    <property type="entry name" value="Protochl_reductN"/>
</dbReference>
<dbReference type="NCBIfam" id="TIGR01279">
    <property type="entry name" value="DPOR_bchN"/>
    <property type="match status" value="1"/>
</dbReference>
<dbReference type="NCBIfam" id="NF002768">
    <property type="entry name" value="PRK02842.1"/>
    <property type="match status" value="1"/>
</dbReference>
<dbReference type="PANTHER" id="PTHR39429">
    <property type="entry name" value="LIGHT-INDEPENDENT PROTOCHLOROPHYLLIDE REDUCTASE SUBUNIT N"/>
    <property type="match status" value="1"/>
</dbReference>
<dbReference type="PANTHER" id="PTHR39429:SF3">
    <property type="entry name" value="LIGHT-INDEPENDENT PROTOCHLOROPHYLLIDE REDUCTASE SUBUNIT N"/>
    <property type="match status" value="1"/>
</dbReference>
<dbReference type="Pfam" id="PF00148">
    <property type="entry name" value="Oxidored_nitro"/>
    <property type="match status" value="1"/>
</dbReference>
<dbReference type="PIRSF" id="PIRSF000162">
    <property type="entry name" value="P_chlorophyll_rd"/>
    <property type="match status" value="1"/>
</dbReference>
<dbReference type="SUPFAM" id="SSF53807">
    <property type="entry name" value="Helical backbone' metal receptor"/>
    <property type="match status" value="1"/>
</dbReference>
<organism>
    <name type="scientific">Rhodopseudomonas palustris (strain ATCC BAA-98 / CGA009)</name>
    <dbReference type="NCBI Taxonomy" id="258594"/>
    <lineage>
        <taxon>Bacteria</taxon>
        <taxon>Pseudomonadati</taxon>
        <taxon>Pseudomonadota</taxon>
        <taxon>Alphaproteobacteria</taxon>
        <taxon>Hyphomicrobiales</taxon>
        <taxon>Nitrobacteraceae</taxon>
        <taxon>Rhodopseudomonas</taxon>
    </lineage>
</organism>